<organism>
    <name type="scientific">Caenorhabditis elegans</name>
    <dbReference type="NCBI Taxonomy" id="6239"/>
    <lineage>
        <taxon>Eukaryota</taxon>
        <taxon>Metazoa</taxon>
        <taxon>Ecdysozoa</taxon>
        <taxon>Nematoda</taxon>
        <taxon>Chromadorea</taxon>
        <taxon>Rhabditida</taxon>
        <taxon>Rhabditina</taxon>
        <taxon>Rhabditomorpha</taxon>
        <taxon>Rhabditoidea</taxon>
        <taxon>Rhabditidae</taxon>
        <taxon>Peloderinae</taxon>
        <taxon>Caenorhabditis</taxon>
    </lineage>
</organism>
<keyword id="KW-0413">Isomerase</keyword>
<keyword id="KW-0576">Peroxisome</keyword>
<keyword id="KW-1185">Reference proteome</keyword>
<comment type="subcellular location">
    <subcellularLocation>
        <location evidence="2">Peroxisome</location>
    </subcellularLocation>
</comment>
<comment type="similarity">
    <text evidence="2">Belongs to the enoyl-CoA hydratase/isomerase family.</text>
</comment>
<reference key="1">
    <citation type="journal article" date="1998" name="Science">
        <title>Genome sequence of the nematode C. elegans: a platform for investigating biology.</title>
        <authorList>
            <consortium name="The C. elegans sequencing consortium"/>
        </authorList>
    </citation>
    <scope>NUCLEOTIDE SEQUENCE [LARGE SCALE GENOMIC DNA]</scope>
    <source>
        <strain>Bristol N2</strain>
    </source>
</reference>
<accession>P41942</accession>
<protein>
    <recommendedName>
        <fullName>Uncharacterized protein B0272.4</fullName>
    </recommendedName>
</protein>
<evidence type="ECO:0000255" key="1"/>
<evidence type="ECO:0000305" key="2"/>
<name>YKB4_CAEEL</name>
<sequence>MTSGLILTERKNNVLWVTLNRPKKFNALTRQMFLDLCTVFNDAADDDDIAFVVFTGGKGKYYCAGSDFSPAELSTLTDIQEHGYKLFVDILIAFPKPIIALVNGHAVGVSVTMLGVMDAVIAIDTATFATPFADIGVCPEACSSYTLPRIMGHQKAAALMMFSEKFTAHEAHIAGLVTQILPAATFEKDAKKIIDRYSKLSPITMKVAKELMRTTQIKDELLTVNRKEQVHLNGMFSHEDTIARLTAKFVKPSKI</sequence>
<gene>
    <name type="ORF">B0272.4</name>
</gene>
<dbReference type="EMBL" id="Z46240">
    <property type="protein sequence ID" value="CAA86314.1"/>
    <property type="molecule type" value="Genomic_DNA"/>
</dbReference>
<dbReference type="PIR" id="T18687">
    <property type="entry name" value="T18687"/>
</dbReference>
<dbReference type="RefSeq" id="NP_509583.1">
    <property type="nucleotide sequence ID" value="NM_077182.2"/>
</dbReference>
<dbReference type="SMR" id="P41942"/>
<dbReference type="BioGRID" id="46758">
    <property type="interactions" value="2"/>
</dbReference>
<dbReference type="DIP" id="DIP-24719N"/>
<dbReference type="FunCoup" id="P41942">
    <property type="interactions" value="3"/>
</dbReference>
<dbReference type="IntAct" id="P41942">
    <property type="interactions" value="2"/>
</dbReference>
<dbReference type="STRING" id="6239.B0272.4.1"/>
<dbReference type="PaxDb" id="6239-B0272.4"/>
<dbReference type="PeptideAtlas" id="P41942"/>
<dbReference type="EnsemblMetazoa" id="B0272.4.1">
    <property type="protein sequence ID" value="B0272.4.1"/>
    <property type="gene ID" value="WBGene00007130"/>
</dbReference>
<dbReference type="GeneID" id="181892"/>
<dbReference type="KEGG" id="cel:CELE_B0272.4"/>
<dbReference type="UCSC" id="B0272.4">
    <property type="organism name" value="c. elegans"/>
</dbReference>
<dbReference type="AGR" id="WB:WBGene00007130"/>
<dbReference type="CTD" id="181892"/>
<dbReference type="WormBase" id="B0272.4">
    <property type="protein sequence ID" value="CE00853"/>
    <property type="gene ID" value="WBGene00007130"/>
</dbReference>
<dbReference type="eggNOG" id="KOG0016">
    <property type="taxonomic scope" value="Eukaryota"/>
</dbReference>
<dbReference type="GeneTree" id="ENSGT00940000173631"/>
<dbReference type="HOGENOM" id="CLU_009834_7_2_1"/>
<dbReference type="InParanoid" id="P41942"/>
<dbReference type="OMA" id="FQAIMDF"/>
<dbReference type="OrthoDB" id="409763at2759"/>
<dbReference type="PhylomeDB" id="P41942"/>
<dbReference type="Reactome" id="R-CEL-390247">
    <property type="pathway name" value="Beta-oxidation of very long chain fatty acids"/>
</dbReference>
<dbReference type="Reactome" id="R-CEL-9033241">
    <property type="pathway name" value="Peroxisomal protein import"/>
</dbReference>
<dbReference type="PRO" id="PR:P41942"/>
<dbReference type="Proteomes" id="UP000001940">
    <property type="component" value="Chromosome X"/>
</dbReference>
<dbReference type="Bgee" id="WBGene00007130">
    <property type="expression patterns" value="Expressed in larva and 4 other cell types or tissues"/>
</dbReference>
<dbReference type="GO" id="GO:0005777">
    <property type="term" value="C:peroxisome"/>
    <property type="evidence" value="ECO:0007669"/>
    <property type="project" value="UniProtKB-SubCell"/>
</dbReference>
<dbReference type="GO" id="GO:0016853">
    <property type="term" value="F:isomerase activity"/>
    <property type="evidence" value="ECO:0007669"/>
    <property type="project" value="UniProtKB-KW"/>
</dbReference>
<dbReference type="CDD" id="cd06558">
    <property type="entry name" value="crotonase-like"/>
    <property type="match status" value="1"/>
</dbReference>
<dbReference type="Gene3D" id="3.90.226.10">
    <property type="entry name" value="2-enoyl-CoA Hydratase, Chain A, domain 1"/>
    <property type="match status" value="1"/>
</dbReference>
<dbReference type="Gene3D" id="1.10.12.10">
    <property type="entry name" value="Lyase 2-enoyl-coa Hydratase, Chain A, domain 2"/>
    <property type="match status" value="1"/>
</dbReference>
<dbReference type="InterPro" id="IPR029045">
    <property type="entry name" value="ClpP/crotonase-like_dom_sf"/>
</dbReference>
<dbReference type="InterPro" id="IPR051053">
    <property type="entry name" value="ECH/Chromodomain_protein"/>
</dbReference>
<dbReference type="InterPro" id="IPR001753">
    <property type="entry name" value="Enoyl-CoA_hydra/iso"/>
</dbReference>
<dbReference type="InterPro" id="IPR014748">
    <property type="entry name" value="Enoyl-CoA_hydra_C"/>
</dbReference>
<dbReference type="PANTHER" id="PTHR43684">
    <property type="match status" value="1"/>
</dbReference>
<dbReference type="PANTHER" id="PTHR43684:SF14">
    <property type="entry name" value="PROTEIN CBG16141"/>
    <property type="match status" value="1"/>
</dbReference>
<dbReference type="Pfam" id="PF00378">
    <property type="entry name" value="ECH_1"/>
    <property type="match status" value="1"/>
</dbReference>
<dbReference type="SUPFAM" id="SSF52096">
    <property type="entry name" value="ClpP/crotonase"/>
    <property type="match status" value="1"/>
</dbReference>
<feature type="chain" id="PRO_0000109356" description="Uncharacterized protein B0272.4">
    <location>
        <begin position="1"/>
        <end position="255"/>
    </location>
</feature>
<feature type="short sequence motif" description="Microbody targeting signal" evidence="1">
    <location>
        <begin position="253"/>
        <end position="255"/>
    </location>
</feature>
<proteinExistence type="inferred from homology"/>